<keyword id="KW-0227">DNA damage</keyword>
<keyword id="KW-0233">DNA recombination</keyword>
<keyword id="KW-0234">DNA repair</keyword>
<keyword id="KW-1185">Reference proteome</keyword>
<dbReference type="EMBL" id="BX294140">
    <property type="protein sequence ID" value="CAD73875.1"/>
    <property type="status" value="ALT_INIT"/>
    <property type="molecule type" value="Genomic_DNA"/>
</dbReference>
<dbReference type="RefSeq" id="NP_866189.1">
    <property type="nucleotide sequence ID" value="NC_005027.1"/>
</dbReference>
<dbReference type="RefSeq" id="WP_011119985.1">
    <property type="nucleotide sequence ID" value="NC_005027.1"/>
</dbReference>
<dbReference type="SMR" id="Q7USC2"/>
<dbReference type="FunCoup" id="Q7USC2">
    <property type="interactions" value="44"/>
</dbReference>
<dbReference type="STRING" id="243090.RB4591"/>
<dbReference type="EnsemblBacteria" id="CAD73875">
    <property type="protein sequence ID" value="CAD73875"/>
    <property type="gene ID" value="RB4591"/>
</dbReference>
<dbReference type="KEGG" id="rba:RB4591"/>
<dbReference type="PATRIC" id="fig|243090.15.peg.2149"/>
<dbReference type="eggNOG" id="COG1381">
    <property type="taxonomic scope" value="Bacteria"/>
</dbReference>
<dbReference type="HOGENOM" id="CLU_066632_2_0_0"/>
<dbReference type="InParanoid" id="Q7USC2"/>
<dbReference type="OrthoDB" id="9797083at2"/>
<dbReference type="Proteomes" id="UP000001025">
    <property type="component" value="Chromosome"/>
</dbReference>
<dbReference type="GO" id="GO:0043590">
    <property type="term" value="C:bacterial nucleoid"/>
    <property type="evidence" value="ECO:0000318"/>
    <property type="project" value="GO_Central"/>
</dbReference>
<dbReference type="GO" id="GO:0006310">
    <property type="term" value="P:DNA recombination"/>
    <property type="evidence" value="ECO:0007669"/>
    <property type="project" value="UniProtKB-UniRule"/>
</dbReference>
<dbReference type="GO" id="GO:0006302">
    <property type="term" value="P:double-strand break repair"/>
    <property type="evidence" value="ECO:0000318"/>
    <property type="project" value="GO_Central"/>
</dbReference>
<dbReference type="Gene3D" id="2.40.50.140">
    <property type="entry name" value="Nucleic acid-binding proteins"/>
    <property type="match status" value="1"/>
</dbReference>
<dbReference type="Gene3D" id="1.20.1440.120">
    <property type="entry name" value="Recombination protein O, C-terminal domain"/>
    <property type="match status" value="1"/>
</dbReference>
<dbReference type="HAMAP" id="MF_00201">
    <property type="entry name" value="RecO"/>
    <property type="match status" value="1"/>
</dbReference>
<dbReference type="InterPro" id="IPR037278">
    <property type="entry name" value="ARFGAP/RecO"/>
</dbReference>
<dbReference type="InterPro" id="IPR022572">
    <property type="entry name" value="DNA_rep/recomb_RecO_N"/>
</dbReference>
<dbReference type="InterPro" id="IPR012340">
    <property type="entry name" value="NA-bd_OB-fold"/>
</dbReference>
<dbReference type="InterPro" id="IPR003717">
    <property type="entry name" value="RecO"/>
</dbReference>
<dbReference type="InterPro" id="IPR042242">
    <property type="entry name" value="RecO_C"/>
</dbReference>
<dbReference type="NCBIfam" id="TIGR00613">
    <property type="entry name" value="reco"/>
    <property type="match status" value="1"/>
</dbReference>
<dbReference type="PANTHER" id="PTHR33991">
    <property type="entry name" value="DNA REPAIR PROTEIN RECO"/>
    <property type="match status" value="1"/>
</dbReference>
<dbReference type="PANTHER" id="PTHR33991:SF1">
    <property type="entry name" value="DNA REPAIR PROTEIN RECO"/>
    <property type="match status" value="1"/>
</dbReference>
<dbReference type="Pfam" id="PF02565">
    <property type="entry name" value="RecO_C"/>
    <property type="match status" value="1"/>
</dbReference>
<dbReference type="Pfam" id="PF11967">
    <property type="entry name" value="RecO_N"/>
    <property type="match status" value="1"/>
</dbReference>
<dbReference type="SUPFAM" id="SSF57863">
    <property type="entry name" value="ArfGap/RecO-like zinc finger"/>
    <property type="match status" value="1"/>
</dbReference>
<dbReference type="SUPFAM" id="SSF50249">
    <property type="entry name" value="Nucleic acid-binding proteins"/>
    <property type="match status" value="1"/>
</dbReference>
<gene>
    <name evidence="1" type="primary">recO</name>
    <name type="ordered locus">RB4591</name>
</gene>
<organism>
    <name type="scientific">Rhodopirellula baltica (strain DSM 10527 / NCIMB 13988 / SH1)</name>
    <dbReference type="NCBI Taxonomy" id="243090"/>
    <lineage>
        <taxon>Bacteria</taxon>
        <taxon>Pseudomonadati</taxon>
        <taxon>Planctomycetota</taxon>
        <taxon>Planctomycetia</taxon>
        <taxon>Pirellulales</taxon>
        <taxon>Pirellulaceae</taxon>
        <taxon>Rhodopirellula</taxon>
    </lineage>
</organism>
<feature type="chain" id="PRO_0000204988" description="DNA repair protein RecO">
    <location>
        <begin position="1"/>
        <end position="270"/>
    </location>
</feature>
<feature type="region of interest" description="Disordered" evidence="2">
    <location>
        <begin position="202"/>
        <end position="221"/>
    </location>
</feature>
<comment type="function">
    <text evidence="1">Involved in DNA repair and RecF pathway recombination.</text>
</comment>
<comment type="similarity">
    <text evidence="1">Belongs to the RecO family.</text>
</comment>
<comment type="sequence caution" evidence="3">
    <conflict type="erroneous initiation">
        <sequence resource="EMBL-CDS" id="CAD73875"/>
    </conflict>
</comment>
<proteinExistence type="inferred from homology"/>
<accession>Q7USC2</accession>
<protein>
    <recommendedName>
        <fullName evidence="1">DNA repair protein RecO</fullName>
    </recommendedName>
    <alternativeName>
        <fullName evidence="1">Recombination protein O</fullName>
    </alternativeName>
</protein>
<reference key="1">
    <citation type="journal article" date="2003" name="Proc. Natl. Acad. Sci. U.S.A.">
        <title>Complete genome sequence of the marine planctomycete Pirellula sp. strain 1.</title>
        <authorList>
            <person name="Gloeckner F.O."/>
            <person name="Kube M."/>
            <person name="Bauer M."/>
            <person name="Teeling H."/>
            <person name="Lombardot T."/>
            <person name="Ludwig W."/>
            <person name="Gade D."/>
            <person name="Beck A."/>
            <person name="Borzym K."/>
            <person name="Heitmann K."/>
            <person name="Rabus R."/>
            <person name="Schlesner H."/>
            <person name="Amann R."/>
            <person name="Reinhardt R."/>
        </authorList>
    </citation>
    <scope>NUCLEOTIDE SEQUENCE [LARGE SCALE GENOMIC DNA]</scope>
    <source>
        <strain>DSM 10527 / NCIMB 13988 / SH1</strain>
    </source>
</reference>
<name>RECO_RHOBA</name>
<evidence type="ECO:0000255" key="1">
    <source>
        <dbReference type="HAMAP-Rule" id="MF_00201"/>
    </source>
</evidence>
<evidence type="ECO:0000256" key="2">
    <source>
        <dbReference type="SAM" id="MobiDB-lite"/>
    </source>
</evidence>
<evidence type="ECO:0000305" key="3"/>
<sequence length="270" mass="29716">MAIVLRTVDFSETSLIVTLLTKDLGRISALAKGARRLKGPFEGSLDLLSVCAITLIDKPGDTLDLLTESKLRRRFRGAQRSLERLHAGYYIAEMLRLLVDDDDPHRELFDMTLSAMGMIDGEGHVAKTLLAFDAQCLRLLGHSPATQRCTVCGRDAERSRRRASFSLVGGGVVCENCRPSQSHLMTASWDALDALRELASEPELPPSTIDADTDNPSQPPSTAFPIGRLFPAMTPAIYRDLRGLLNRTLESLVGQTPRMQPFLPDKLDSL</sequence>